<feature type="chain" id="PRO_1000056625" description="Ribosomal RNA small subunit methyltransferase A">
    <location>
        <begin position="1"/>
        <end position="281"/>
    </location>
</feature>
<feature type="binding site" evidence="1">
    <location>
        <position position="18"/>
    </location>
    <ligand>
        <name>S-adenosyl-L-methionine</name>
        <dbReference type="ChEBI" id="CHEBI:59789"/>
    </ligand>
</feature>
<feature type="binding site" evidence="1">
    <location>
        <position position="20"/>
    </location>
    <ligand>
        <name>S-adenosyl-L-methionine</name>
        <dbReference type="ChEBI" id="CHEBI:59789"/>
    </ligand>
</feature>
<feature type="binding site" evidence="1">
    <location>
        <position position="45"/>
    </location>
    <ligand>
        <name>S-adenosyl-L-methionine</name>
        <dbReference type="ChEBI" id="CHEBI:59789"/>
    </ligand>
</feature>
<feature type="binding site" evidence="1">
    <location>
        <position position="66"/>
    </location>
    <ligand>
        <name>S-adenosyl-L-methionine</name>
        <dbReference type="ChEBI" id="CHEBI:59789"/>
    </ligand>
</feature>
<feature type="binding site" evidence="1">
    <location>
        <position position="91"/>
    </location>
    <ligand>
        <name>S-adenosyl-L-methionine</name>
        <dbReference type="ChEBI" id="CHEBI:59789"/>
    </ligand>
</feature>
<feature type="binding site" evidence="1">
    <location>
        <position position="118"/>
    </location>
    <ligand>
        <name>S-adenosyl-L-methionine</name>
        <dbReference type="ChEBI" id="CHEBI:59789"/>
    </ligand>
</feature>
<dbReference type="EC" id="2.1.1.182" evidence="1"/>
<dbReference type="EMBL" id="CP000436">
    <property type="protein sequence ID" value="ABI25827.1"/>
    <property type="molecule type" value="Genomic_DNA"/>
</dbReference>
<dbReference type="SMR" id="Q0I5C3"/>
<dbReference type="KEGG" id="hso:HS_1559"/>
<dbReference type="eggNOG" id="COG0030">
    <property type="taxonomic scope" value="Bacteria"/>
</dbReference>
<dbReference type="HOGENOM" id="CLU_041220_0_1_6"/>
<dbReference type="GO" id="GO:0005829">
    <property type="term" value="C:cytosol"/>
    <property type="evidence" value="ECO:0007669"/>
    <property type="project" value="TreeGrafter"/>
</dbReference>
<dbReference type="GO" id="GO:0052908">
    <property type="term" value="F:16S rRNA (adenine(1518)-N(6)/adenine(1519)-N(6))-dimethyltransferase activity"/>
    <property type="evidence" value="ECO:0007669"/>
    <property type="project" value="UniProtKB-EC"/>
</dbReference>
<dbReference type="GO" id="GO:0003723">
    <property type="term" value="F:RNA binding"/>
    <property type="evidence" value="ECO:0007669"/>
    <property type="project" value="UniProtKB-KW"/>
</dbReference>
<dbReference type="FunFam" id="1.10.8.100:FF:000001">
    <property type="entry name" value="Ribosomal RNA small subunit methyltransferase A"/>
    <property type="match status" value="1"/>
</dbReference>
<dbReference type="FunFam" id="3.40.50.150:FF:000006">
    <property type="entry name" value="Ribosomal RNA small subunit methyltransferase A"/>
    <property type="match status" value="1"/>
</dbReference>
<dbReference type="Gene3D" id="1.10.8.100">
    <property type="entry name" value="Ribosomal RNA adenine dimethylase-like, domain 2"/>
    <property type="match status" value="1"/>
</dbReference>
<dbReference type="Gene3D" id="3.40.50.150">
    <property type="entry name" value="Vaccinia Virus protein VP39"/>
    <property type="match status" value="1"/>
</dbReference>
<dbReference type="HAMAP" id="MF_00607">
    <property type="entry name" value="16SrRNA_methyltr_A"/>
    <property type="match status" value="1"/>
</dbReference>
<dbReference type="InterPro" id="IPR001737">
    <property type="entry name" value="KsgA/Erm"/>
</dbReference>
<dbReference type="InterPro" id="IPR023165">
    <property type="entry name" value="rRNA_Ade_diMease-like_C"/>
</dbReference>
<dbReference type="InterPro" id="IPR020596">
    <property type="entry name" value="rRNA_Ade_Mease_Trfase_CS"/>
</dbReference>
<dbReference type="InterPro" id="IPR020598">
    <property type="entry name" value="rRNA_Ade_methylase_Trfase_N"/>
</dbReference>
<dbReference type="InterPro" id="IPR011530">
    <property type="entry name" value="rRNA_adenine_dimethylase"/>
</dbReference>
<dbReference type="InterPro" id="IPR029063">
    <property type="entry name" value="SAM-dependent_MTases_sf"/>
</dbReference>
<dbReference type="NCBIfam" id="TIGR00755">
    <property type="entry name" value="ksgA"/>
    <property type="match status" value="1"/>
</dbReference>
<dbReference type="PANTHER" id="PTHR11727">
    <property type="entry name" value="DIMETHYLADENOSINE TRANSFERASE"/>
    <property type="match status" value="1"/>
</dbReference>
<dbReference type="PANTHER" id="PTHR11727:SF7">
    <property type="entry name" value="DIMETHYLADENOSINE TRANSFERASE-RELATED"/>
    <property type="match status" value="1"/>
</dbReference>
<dbReference type="Pfam" id="PF00398">
    <property type="entry name" value="RrnaAD"/>
    <property type="match status" value="1"/>
</dbReference>
<dbReference type="SMART" id="SM00650">
    <property type="entry name" value="rADc"/>
    <property type="match status" value="1"/>
</dbReference>
<dbReference type="SUPFAM" id="SSF53335">
    <property type="entry name" value="S-adenosyl-L-methionine-dependent methyltransferases"/>
    <property type="match status" value="1"/>
</dbReference>
<dbReference type="PROSITE" id="PS01131">
    <property type="entry name" value="RRNA_A_DIMETH"/>
    <property type="match status" value="1"/>
</dbReference>
<dbReference type="PROSITE" id="PS51689">
    <property type="entry name" value="SAM_RNA_A_N6_MT"/>
    <property type="match status" value="1"/>
</dbReference>
<name>RSMA_HISS1</name>
<protein>
    <recommendedName>
        <fullName evidence="1">Ribosomal RNA small subunit methyltransferase A</fullName>
        <ecNumber evidence="1">2.1.1.182</ecNumber>
    </recommendedName>
    <alternativeName>
        <fullName evidence="1">16S rRNA (adenine(1518)-N(6)/adenine(1519)-N(6))-dimethyltransferase</fullName>
    </alternativeName>
    <alternativeName>
        <fullName evidence="1">16S rRNA dimethyladenosine transferase</fullName>
    </alternativeName>
    <alternativeName>
        <fullName evidence="1">16S rRNA dimethylase</fullName>
    </alternativeName>
    <alternativeName>
        <fullName evidence="1">S-adenosylmethionine-6-N', N'-adenosyl(rRNA) dimethyltransferase</fullName>
    </alternativeName>
</protein>
<evidence type="ECO:0000255" key="1">
    <source>
        <dbReference type="HAMAP-Rule" id="MF_00607"/>
    </source>
</evidence>
<organism>
    <name type="scientific">Histophilus somni (strain 129Pt)</name>
    <name type="common">Haemophilus somnus</name>
    <dbReference type="NCBI Taxonomy" id="205914"/>
    <lineage>
        <taxon>Bacteria</taxon>
        <taxon>Pseudomonadati</taxon>
        <taxon>Pseudomonadota</taxon>
        <taxon>Gammaproteobacteria</taxon>
        <taxon>Pasteurellales</taxon>
        <taxon>Pasteurellaceae</taxon>
        <taxon>Histophilus</taxon>
    </lineage>
</organism>
<reference key="1">
    <citation type="journal article" date="2007" name="J. Bacteriol.">
        <title>Complete genome sequence of Haemophilus somnus (Histophilus somni) strain 129Pt and comparison to Haemophilus ducreyi 35000HP and Haemophilus influenzae Rd.</title>
        <authorList>
            <person name="Challacombe J.F."/>
            <person name="Duncan A.J."/>
            <person name="Brettin T.S."/>
            <person name="Bruce D."/>
            <person name="Chertkov O."/>
            <person name="Detter J.C."/>
            <person name="Han C.S."/>
            <person name="Misra M."/>
            <person name="Richardson P."/>
            <person name="Tapia R."/>
            <person name="Thayer N."/>
            <person name="Xie G."/>
            <person name="Inzana T.J."/>
        </authorList>
    </citation>
    <scope>NUCLEOTIDE SEQUENCE [LARGE SCALE GENOMIC DNA]</scope>
    <source>
        <strain>129Pt</strain>
    </source>
</reference>
<keyword id="KW-0963">Cytoplasm</keyword>
<keyword id="KW-0489">Methyltransferase</keyword>
<keyword id="KW-0694">RNA-binding</keyword>
<keyword id="KW-0698">rRNA processing</keyword>
<keyword id="KW-0949">S-adenosyl-L-methionine</keyword>
<keyword id="KW-0808">Transferase</keyword>
<gene>
    <name evidence="1" type="primary">rsmA</name>
    <name evidence="1" type="synonym">ksgA</name>
    <name type="ordered locus">HS_1559</name>
</gene>
<accession>Q0I5C3</accession>
<comment type="function">
    <text evidence="1">Specifically dimethylates two adjacent adenosines (A1518 and A1519) in the loop of a conserved hairpin near the 3'-end of 16S rRNA in the 30S particle. May play a critical role in biogenesis of 30S subunits.</text>
</comment>
<comment type="catalytic activity">
    <reaction evidence="1">
        <text>adenosine(1518)/adenosine(1519) in 16S rRNA + 4 S-adenosyl-L-methionine = N(6)-dimethyladenosine(1518)/N(6)-dimethyladenosine(1519) in 16S rRNA + 4 S-adenosyl-L-homocysteine + 4 H(+)</text>
        <dbReference type="Rhea" id="RHEA:19609"/>
        <dbReference type="Rhea" id="RHEA-COMP:10232"/>
        <dbReference type="Rhea" id="RHEA-COMP:10233"/>
        <dbReference type="ChEBI" id="CHEBI:15378"/>
        <dbReference type="ChEBI" id="CHEBI:57856"/>
        <dbReference type="ChEBI" id="CHEBI:59789"/>
        <dbReference type="ChEBI" id="CHEBI:74411"/>
        <dbReference type="ChEBI" id="CHEBI:74493"/>
        <dbReference type="EC" id="2.1.1.182"/>
    </reaction>
</comment>
<comment type="subcellular location">
    <subcellularLocation>
        <location evidence="1">Cytoplasm</location>
    </subcellularLocation>
</comment>
<comment type="similarity">
    <text evidence="1">Belongs to the class I-like SAM-binding methyltransferase superfamily. rRNA adenine N(6)-methyltransferase family. RsmA subfamily.</text>
</comment>
<proteinExistence type="inferred from homology"/>
<sequence>MKSKTHLGHTARKRFGQNFLHDNNIIQNIVMAIYPQKEQFLVEIGPGLGALTEPVAEKVERLTVIELDRDLAERLRHHPFLHQKLNVIEYDAMQFNFEQLYIDENLAEKNQKLRVFGNLPYNISTPLMFHLFKYHAIIQDMHFMLQKEVVKRLCAAPNSKAYGRLTIMAQYFCQVLPVLEVPPTAFKPAPKVESAVVRLIPHKELPYPVKDLYWLNRVTTQAFNQRRKTLRNALSTLFSAEKLTALAIDLEARAENLSIADYARLANYLADNPPTEDLQSE</sequence>